<reference key="1">
    <citation type="journal article" date="1995" name="Proc. Natl. Acad. Sci. U.S.A.">
        <title>Root of the universal tree of life based on ancient aminoacyl-tRNA synthetase gene duplications.</title>
        <authorList>
            <person name="Brown J.R."/>
            <person name="Doolittle W.F."/>
        </authorList>
    </citation>
    <scope>NUCLEOTIDE SEQUENCE [GENOMIC DNA]</scope>
</reference>
<proteinExistence type="inferred from homology"/>
<name>SYI_AQUPY</name>
<protein>
    <recommendedName>
        <fullName>Isoleucine--tRNA ligase</fullName>
        <ecNumber>6.1.1.5</ecNumber>
    </recommendedName>
    <alternativeName>
        <fullName>Isoleucyl-tRNA synthetase</fullName>
        <shortName>IleRS</shortName>
    </alternativeName>
</protein>
<comment type="function">
    <text evidence="1">Catalyzes the attachment of isoleucine to tRNA(Ile). As IleRS can inadvertently accommodate and process structurally similar amino acids such as valine, to avoid such errors it has two additional distinct tRNA(Ile)-dependent editing activities. One activity is designated as 'pretransfer' editing and involves the hydrolysis of activated Val-AMP. The other activity is designated 'posttransfer' editing and involves deacylation of mischarged Val-tRNA(Ile) (By similarity).</text>
</comment>
<comment type="catalytic activity">
    <reaction>
        <text>tRNA(Ile) + L-isoleucine + ATP = L-isoleucyl-tRNA(Ile) + AMP + diphosphate</text>
        <dbReference type="Rhea" id="RHEA:11060"/>
        <dbReference type="Rhea" id="RHEA-COMP:9666"/>
        <dbReference type="Rhea" id="RHEA-COMP:9695"/>
        <dbReference type="ChEBI" id="CHEBI:30616"/>
        <dbReference type="ChEBI" id="CHEBI:33019"/>
        <dbReference type="ChEBI" id="CHEBI:58045"/>
        <dbReference type="ChEBI" id="CHEBI:78442"/>
        <dbReference type="ChEBI" id="CHEBI:78528"/>
        <dbReference type="ChEBI" id="CHEBI:456215"/>
        <dbReference type="EC" id="6.1.1.5"/>
    </reaction>
</comment>
<comment type="subunit">
    <text evidence="1">Monomer.</text>
</comment>
<comment type="subcellular location">
    <subcellularLocation>
        <location evidence="1">Cytoplasm</location>
    </subcellularLocation>
</comment>
<comment type="domain">
    <text evidence="1">IleRS has two distinct active sites: one for aminoacylation and one for editing. The misactivated valine is translocated from the active site to the editing site, which sterically excludes the correctly activated isoleucine. The single editing site contains two valyl binding pockets, one specific for each substrate (Val-AMP or Val-tRNA(Ile)) (By similarity).</text>
</comment>
<comment type="similarity">
    <text evidence="2">Belongs to the class-I aminoacyl-tRNA synthetase family. IleS type 1 subfamily.</text>
</comment>
<keyword id="KW-0030">Aminoacyl-tRNA synthetase</keyword>
<keyword id="KW-0067">ATP-binding</keyword>
<keyword id="KW-0963">Cytoplasm</keyword>
<keyword id="KW-0436">Ligase</keyword>
<keyword id="KW-0547">Nucleotide-binding</keyword>
<keyword id="KW-0648">Protein biosynthesis</keyword>
<feature type="chain" id="PRO_0000098342" description="Isoleucine--tRNA ligase">
    <location>
        <begin position="1" status="less than"/>
        <end position="529" status="greater than"/>
    </location>
</feature>
<feature type="short sequence motif" description="'KMSKS' region">
    <location>
        <begin position="523"/>
        <end position="527"/>
    </location>
</feature>
<feature type="binding site" evidence="1">
    <location>
        <position position="482"/>
    </location>
    <ligand>
        <name>L-isoleucyl-5'-AMP</name>
        <dbReference type="ChEBI" id="CHEBI:178002"/>
    </ligand>
</feature>
<feature type="binding site" evidence="1">
    <location>
        <position position="526"/>
    </location>
    <ligand>
        <name>ATP</name>
        <dbReference type="ChEBI" id="CHEBI:30616"/>
    </ligand>
</feature>
<feature type="non-terminal residue">
    <location>
        <position position="1"/>
    </location>
</feature>
<feature type="non-terminal residue">
    <location>
        <position position="529"/>
    </location>
</feature>
<gene>
    <name type="primary">ileS</name>
</gene>
<sequence>DTHGLPIERAVEKELSKKKIRKESLPKTEFRKLCREYANRYVNIQKEEFIRLGVLGDWENPYLTMSPEYEATEIRELGKFFEKGLAYRSKKPVYWCIYDKTAEGQAEVEYYEKEDPSIYVKFPLKKEIEGKKAYAVIWTTTPWTLPANLGIMVKEDADYSLVEVEGEVWIVAKELLENFFKNIGKTYTRVLKDVKGRDLVGLEYEHPFVDRDELKGYLSEETLKNMWRIYPSEFVSLDTGTGLVHMAPGHGQEDYTVGKRYNLEPYAPLDDSGRFVEPAPEFIRGVRVFDANKLIIALLKEKGYLVHEARIRHSYPHCWRCKNPVIFRATPQWFIGMDIEYEGKTLSGESLEEIEKVKWIPEYGKNRIKSMVENRPDWCISRQRFWGVPITVFYCENCGEVIKDKEVFERIASLVEKHPGGTDVWFEKSPEEILPEGYKCPKCGGTSFRKEEDILDVWFDSGCSHASVIRPLGFEKADLYLEGSDQHRGWFQASLLESVGSYGEAPYRSVLTHGFIVDEQGRKMSKSLV</sequence>
<evidence type="ECO:0000250" key="1"/>
<evidence type="ECO:0000305" key="2"/>
<accession>P46207</accession>
<organism>
    <name type="scientific">Aquifex pyrophilus</name>
    <dbReference type="NCBI Taxonomy" id="2714"/>
    <lineage>
        <taxon>Bacteria</taxon>
        <taxon>Pseudomonadati</taxon>
        <taxon>Aquificota</taxon>
        <taxon>Aquificia</taxon>
        <taxon>Aquificales</taxon>
        <taxon>Aquificaceae</taxon>
        <taxon>Aquifex</taxon>
    </lineage>
</organism>
<dbReference type="EC" id="6.1.1.5"/>
<dbReference type="EMBL" id="L37096">
    <property type="protein sequence ID" value="AAA87287.1"/>
    <property type="molecule type" value="Genomic_DNA"/>
</dbReference>
<dbReference type="PIR" id="I39658">
    <property type="entry name" value="I39658"/>
</dbReference>
<dbReference type="SMR" id="P46207"/>
<dbReference type="GO" id="GO:0005829">
    <property type="term" value="C:cytosol"/>
    <property type="evidence" value="ECO:0007669"/>
    <property type="project" value="TreeGrafter"/>
</dbReference>
<dbReference type="GO" id="GO:0002161">
    <property type="term" value="F:aminoacyl-tRNA deacylase activity"/>
    <property type="evidence" value="ECO:0007669"/>
    <property type="project" value="InterPro"/>
</dbReference>
<dbReference type="GO" id="GO:0005524">
    <property type="term" value="F:ATP binding"/>
    <property type="evidence" value="ECO:0007669"/>
    <property type="project" value="UniProtKB-KW"/>
</dbReference>
<dbReference type="GO" id="GO:0004822">
    <property type="term" value="F:isoleucine-tRNA ligase activity"/>
    <property type="evidence" value="ECO:0007669"/>
    <property type="project" value="UniProtKB-EC"/>
</dbReference>
<dbReference type="GO" id="GO:0006428">
    <property type="term" value="P:isoleucyl-tRNA aminoacylation"/>
    <property type="evidence" value="ECO:0007669"/>
    <property type="project" value="InterPro"/>
</dbReference>
<dbReference type="Gene3D" id="3.40.50.620">
    <property type="entry name" value="HUPs"/>
    <property type="match status" value="2"/>
</dbReference>
<dbReference type="Gene3D" id="1.10.10.830">
    <property type="entry name" value="Ile-tRNA synthetase CP2 domain-like"/>
    <property type="match status" value="1"/>
</dbReference>
<dbReference type="Gene3D" id="3.90.740.10">
    <property type="entry name" value="Valyl/Leucyl/Isoleucyl-tRNA synthetase, editing domain"/>
    <property type="match status" value="1"/>
</dbReference>
<dbReference type="InterPro" id="IPR002300">
    <property type="entry name" value="aa-tRNA-synth_Ia"/>
</dbReference>
<dbReference type="InterPro" id="IPR002301">
    <property type="entry name" value="Ile-tRNA-ligase"/>
</dbReference>
<dbReference type="InterPro" id="IPR050081">
    <property type="entry name" value="Ile-tRNA_ligase"/>
</dbReference>
<dbReference type="InterPro" id="IPR014729">
    <property type="entry name" value="Rossmann-like_a/b/a_fold"/>
</dbReference>
<dbReference type="InterPro" id="IPR009008">
    <property type="entry name" value="Val/Leu/Ile-tRNA-synth_edit"/>
</dbReference>
<dbReference type="PANTHER" id="PTHR42765:SF1">
    <property type="entry name" value="ISOLEUCINE--TRNA LIGASE, MITOCHONDRIAL"/>
    <property type="match status" value="1"/>
</dbReference>
<dbReference type="PANTHER" id="PTHR42765">
    <property type="entry name" value="SOLEUCYL-TRNA SYNTHETASE"/>
    <property type="match status" value="1"/>
</dbReference>
<dbReference type="Pfam" id="PF00133">
    <property type="entry name" value="tRNA-synt_1"/>
    <property type="match status" value="1"/>
</dbReference>
<dbReference type="PRINTS" id="PR00984">
    <property type="entry name" value="TRNASYNTHILE"/>
</dbReference>
<dbReference type="SUPFAM" id="SSF52374">
    <property type="entry name" value="Nucleotidylyl transferase"/>
    <property type="match status" value="1"/>
</dbReference>
<dbReference type="SUPFAM" id="SSF50677">
    <property type="entry name" value="ValRS/IleRS/LeuRS editing domain"/>
    <property type="match status" value="1"/>
</dbReference>